<feature type="initiator methionine" description="Removed" evidence="1">
    <location>
        <position position="1"/>
    </location>
</feature>
<feature type="chain" id="PRO_0000460501" description="Non-selective voltage-gated ion channel VDAC1">
    <location>
        <begin position="2"/>
        <end position="283"/>
    </location>
</feature>
<feature type="transmembrane region" description="Beta stranded" evidence="1">
    <location>
        <begin position="26"/>
        <end position="35"/>
    </location>
</feature>
<feature type="transmembrane region" description="Beta stranded" evidence="1">
    <location>
        <begin position="39"/>
        <end position="47"/>
    </location>
</feature>
<feature type="transmembrane region" description="Beta stranded" evidence="1">
    <location>
        <begin position="54"/>
        <end position="64"/>
    </location>
</feature>
<feature type="transmembrane region" description="Beta stranded" evidence="1">
    <location>
        <begin position="69"/>
        <end position="76"/>
    </location>
</feature>
<feature type="transmembrane region" description="Beta stranded" evidence="1">
    <location>
        <begin position="80"/>
        <end position="89"/>
    </location>
</feature>
<feature type="transmembrane region" description="Beta stranded" evidence="1">
    <location>
        <begin position="95"/>
        <end position="104"/>
    </location>
</feature>
<feature type="transmembrane region" description="Beta stranded" evidence="1">
    <location>
        <begin position="111"/>
        <end position="120"/>
    </location>
</feature>
<feature type="transmembrane region" description="Beta stranded" evidence="1">
    <location>
        <begin position="123"/>
        <end position="130"/>
    </location>
</feature>
<feature type="transmembrane region" description="Beta stranded" evidence="1">
    <location>
        <begin position="137"/>
        <end position="145"/>
    </location>
</feature>
<feature type="transmembrane region" description="Beta stranded" evidence="1">
    <location>
        <begin position="150"/>
        <end position="158"/>
    </location>
</feature>
<feature type="transmembrane region" description="Beta stranded" evidence="1">
    <location>
        <begin position="163"/>
        <end position="175"/>
    </location>
</feature>
<feature type="transmembrane region" description="Beta stranded" evidence="1">
    <location>
        <begin position="178"/>
        <end position="185"/>
    </location>
</feature>
<feature type="transmembrane region" description="Beta stranded" evidence="1">
    <location>
        <begin position="189"/>
        <end position="198"/>
    </location>
</feature>
<feature type="transmembrane region" description="Beta stranded" evidence="1">
    <location>
        <begin position="202"/>
        <end position="211"/>
    </location>
</feature>
<feature type="transmembrane region" description="Beta stranded" evidence="1">
    <location>
        <begin position="218"/>
        <end position="227"/>
    </location>
</feature>
<feature type="transmembrane region" description="Beta stranded" evidence="1">
    <location>
        <begin position="231"/>
        <end position="238"/>
    </location>
</feature>
<feature type="transmembrane region" description="Beta stranded" evidence="1">
    <location>
        <begin position="242"/>
        <end position="251"/>
    </location>
</feature>
<feature type="transmembrane region" description="Beta stranded" evidence="1">
    <location>
        <begin position="254"/>
        <end position="263"/>
    </location>
</feature>
<feature type="transmembrane region" description="Beta stranded" evidence="1">
    <location>
        <begin position="273"/>
        <end position="282"/>
    </location>
</feature>
<feature type="binding site" evidence="3">
    <location>
        <position position="12"/>
    </location>
    <ligand>
        <name>ATP</name>
        <dbReference type="ChEBI" id="CHEBI:30616"/>
    </ligand>
</feature>
<feature type="binding site" evidence="3">
    <location>
        <position position="20"/>
    </location>
    <ligand>
        <name>ATP</name>
        <dbReference type="ChEBI" id="CHEBI:30616"/>
    </ligand>
</feature>
<feature type="binding site" evidence="1">
    <location>
        <begin position="242"/>
        <end position="244"/>
    </location>
    <ligand>
        <name>NAD(+)</name>
        <dbReference type="ChEBI" id="CHEBI:57540"/>
    </ligand>
</feature>
<feature type="binding site" evidence="1">
    <location>
        <begin position="260"/>
        <end position="264"/>
    </location>
    <ligand>
        <name>NAD(+)</name>
        <dbReference type="ChEBI" id="CHEBI:57540"/>
    </ligand>
</feature>
<feature type="site" description="Involved in ceramide and phosphatidylcholine binding. Critical for channel structural stability and gating" evidence="1">
    <location>
        <position position="73"/>
    </location>
</feature>
<feature type="modified residue" description="N-acetylalanine" evidence="1">
    <location>
        <position position="2"/>
    </location>
</feature>
<feature type="modified residue" description="Phosphoserine" evidence="4">
    <location>
        <position position="13"/>
    </location>
</feature>
<feature type="modified residue" description="Phosphothreonine" evidence="3">
    <location>
        <position position="19"/>
    </location>
</feature>
<feature type="modified residue" description="N6-acetyllysine; alternate" evidence="1">
    <location>
        <position position="20"/>
    </location>
</feature>
<feature type="modified residue" description="N6-succinyllysine; alternate" evidence="3">
    <location>
        <position position="20"/>
    </location>
</feature>
<feature type="modified residue" description="Phosphotyrosine" evidence="3">
    <location>
        <position position="67"/>
    </location>
</feature>
<feature type="modified residue" description="Phosphothreonine" evidence="1">
    <location>
        <position position="107"/>
    </location>
</feature>
<feature type="modified residue" description="N6-acetyllysine; alternate" evidence="3">
    <location>
        <position position="109"/>
    </location>
</feature>
<feature type="modified residue" description="Phosphoserine" evidence="1">
    <location>
        <position position="193"/>
    </location>
</feature>
<feature type="modified residue" description="Phosphoserine" evidence="1">
    <location>
        <position position="240"/>
    </location>
</feature>
<feature type="modified residue" description="N6-acetyllysine" evidence="3">
    <location>
        <position position="252"/>
    </location>
</feature>
<feature type="modified residue" description="N6-acetyllysine; alternate" evidence="1">
    <location>
        <position position="266"/>
    </location>
</feature>
<feature type="cross-link" description="Glycyl lysine isopeptide (Lys-Gly) (interchain with G-Cter in ubiquitin)" evidence="1">
    <location>
        <position position="12"/>
    </location>
</feature>
<feature type="cross-link" description="Glycyl lysine isopeptide (Lys-Gly) (interchain with G-Cter in ubiquitin); alternate" evidence="2">
    <location>
        <position position="20"/>
    </location>
</feature>
<feature type="cross-link" description="Glycyl lysine isopeptide (Lys-Gly) (interchain with G-Cter in ubiquitin)" evidence="1">
    <location>
        <position position="53"/>
    </location>
</feature>
<feature type="cross-link" description="Glycyl lysine isopeptide (Lys-Gly) (interchain with G-Cter in ubiquitin)" evidence="1">
    <location>
        <position position="61"/>
    </location>
</feature>
<feature type="cross-link" description="Glycyl lysine isopeptide (Lys-Gly) (interchain with G-Cter in ubiquitin); alternate" evidence="1">
    <location>
        <position position="109"/>
    </location>
</feature>
<feature type="cross-link" description="Glycyl lysine isopeptide (Lys-Gly) (interchain with G-Cter in ubiquitin)" evidence="1">
    <location>
        <position position="110"/>
    </location>
</feature>
<feature type="cross-link" description="Glycyl lysine isopeptide (Lys-Gly) (interchain with G-Cter in ubiquitin)" evidence="1">
    <location>
        <position position="161"/>
    </location>
</feature>
<feature type="cross-link" description="Glycyl lysine isopeptide (Lys-Gly) (interchain with G-Cter in ubiquitin); alternate" evidence="1">
    <location>
        <position position="266"/>
    </location>
</feature>
<feature type="cross-link" description="Glycyl lysine isopeptide (Lys-Gly) (interchain with G-Cter in ubiquitin)" evidence="1">
    <location>
        <position position="274"/>
    </location>
</feature>
<comment type="function">
    <text evidence="1 3 5">Non-selective voltage-gated ion channel that mediates the transport of anions and cations through the mitochondrion outer membrane and plasma membrane (PubMed:15254371). The channel at the outer mitochondrial membrane allows diffusion of small hydrophilic molecules; in the plasma membrane it is involved in cell volume regulation and apoptosis. It adopts an open conformation at low or zero membrane potential and a closed conformation at potentials above 30-40 mV. The open state has a weak anion selectivity whereas the closed state is cation-selective. Binds various signaling molecules, including the sphingolipid ceramide, the phospholipid phosphatidylcholine, and the sterols cholesterol and oxysterol. In depolarized mitochondria, acts downstream of PRKN and PINK1 to promote mitophagy or prevent apoptosis; polyubiquitination by PRKN promotes mitophagy, while monoubiquitination by PRKN decreases mitochondrial calcium influx which ultimately inhibits apoptosis. May participate in the formation of the permeability transition pore complex (PTPC) responsible for the release of mitochondrial products that triggers apoptosis. May mediate ATP export from cells (By similarity). Part of a complex composed of HSPA9, ITPR1 and VDAC1 that regulates mitochondrial calcium-dependent apoptosis by facilitating calcium transport from the ER lumen to the mitochondria intermembrane space thus providing calcium for the downstream calcium channel MCU that directly releases it into mitochondria matrix (By similarity).</text>
</comment>
<comment type="function">
    <text evidence="1">Catalyzes the scrambling of phospholipids across the outer mitochondrial membrane; the mechanism is unrelated to channel activity and is capable of translocating both anionic and zwitterionic phospholipids.</text>
</comment>
<comment type="catalytic activity">
    <reaction evidence="4">
        <text>Ca(2+)(in) = Ca(2+)(out)</text>
        <dbReference type="Rhea" id="RHEA:29671"/>
        <dbReference type="ChEBI" id="CHEBI:29108"/>
    </reaction>
</comment>
<comment type="catalytic activity">
    <reaction evidence="4">
        <text>Na(+)(in) = Na(+)(out)</text>
        <dbReference type="Rhea" id="RHEA:34963"/>
        <dbReference type="ChEBI" id="CHEBI:29101"/>
    </reaction>
</comment>
<comment type="catalytic activity">
    <reaction evidence="4">
        <text>chloride(in) = chloride(out)</text>
        <dbReference type="Rhea" id="RHEA:29823"/>
        <dbReference type="ChEBI" id="CHEBI:17996"/>
    </reaction>
</comment>
<comment type="catalytic activity">
    <reaction evidence="4">
        <text>Mg(2+)(in) = Mg(2+)(out)</text>
        <dbReference type="Rhea" id="RHEA:29827"/>
        <dbReference type="ChEBI" id="CHEBI:18420"/>
    </reaction>
</comment>
<comment type="catalytic activity">
    <reaction evidence="1">
        <text>K(+)(in) = K(+)(out)</text>
        <dbReference type="Rhea" id="RHEA:29463"/>
        <dbReference type="ChEBI" id="CHEBI:29103"/>
    </reaction>
</comment>
<comment type="catalytic activity">
    <reaction evidence="1">
        <text>ATP(in) = ATP(out)</text>
        <dbReference type="Rhea" id="RHEA:75687"/>
        <dbReference type="ChEBI" id="CHEBI:30616"/>
    </reaction>
</comment>
<comment type="catalytic activity">
    <reaction evidence="5">
        <text>L-glutamate(out) = L-glutamate(in)</text>
        <dbReference type="Rhea" id="RHEA:66336"/>
        <dbReference type="ChEBI" id="CHEBI:29985"/>
    </reaction>
</comment>
<comment type="catalytic activity">
    <reaction evidence="5">
        <text>dopamine(out) = dopamine(in)</text>
        <dbReference type="Rhea" id="RHEA:73863"/>
        <dbReference type="ChEBI" id="CHEBI:59905"/>
    </reaction>
</comment>
<comment type="catalytic activity">
    <reaction evidence="5">
        <text>acetylcholine(in) = acetylcholine(out)</text>
        <dbReference type="Rhea" id="RHEA:74663"/>
        <dbReference type="ChEBI" id="CHEBI:15355"/>
    </reaction>
</comment>
<comment type="catalytic activity">
    <reaction evidence="1">
        <text>Fe(III)-[cytochrome c](out) = Fe(III)-[cytochrome c](in)</text>
        <dbReference type="Rhea" id="RHEA:79311"/>
        <dbReference type="Rhea" id="RHEA-COMP:14399"/>
        <dbReference type="ChEBI" id="CHEBI:29034"/>
    </reaction>
</comment>
<comment type="catalytic activity">
    <reaction evidence="1">
        <text>a 1,2-diacyl-sn-glycero-3-phosphocholine(in) = a 1,2-diacyl-sn-glycero-3-phosphocholine(out)</text>
        <dbReference type="Rhea" id="RHEA:38571"/>
        <dbReference type="ChEBI" id="CHEBI:57643"/>
    </reaction>
</comment>
<comment type="catalytic activity">
    <reaction evidence="1">
        <text>a 1,2-diacyl-sn-glycero-3-phospho-L-serine(in) = a 1,2-diacyl-sn-glycero-3-phospho-L-serine(out)</text>
        <dbReference type="Rhea" id="RHEA:38663"/>
        <dbReference type="ChEBI" id="CHEBI:57262"/>
    </reaction>
</comment>
<comment type="activity regulation">
    <text evidence="5">Voltage-gated ion channel activity is inhibited by L-glutamate, at low negative or positive voltages.</text>
</comment>
<comment type="subunit">
    <text evidence="1 4">Homodimer and homotrimer; in response to cyclic AMP or calcium; oligomerization is required for scramblase activity. Component of the mitochondrial permeability transition pore complex (mPTPC), at least composed of SPG7, VDAC1 and PPIF. Interacts with SPG7, NIPSNAP2 and SLC25A30. Interacts with hexokinases including HK1. The HK1-VDAC1 complex interacts with ATF2. Interacts with BCL2L1. Interacts with BAK1. Interacts with RTL10/BOP (via BH3 domain). Interacts with amyloid-beta and APP; induces VDAC1 dephosphorylation. Interacts with TMEM41B. Interacts with BCAP31 (By similarity). Interacts with HSPA9; this interaction couples ITPR1 to VDAC1 (By similarity).</text>
</comment>
<comment type="subcellular location">
    <subcellularLocation>
        <location evidence="1">Mitochondrion outer membrane</location>
        <topology evidence="1">Multi-pass membrane protein</topology>
    </subcellularLocation>
    <subcellularLocation>
        <location evidence="1">Cell membrane</location>
        <topology evidence="1">Multi-pass membrane protein</topology>
    </subcellularLocation>
    <subcellularLocation>
        <location evidence="1">Membrane raft</location>
        <topology evidence="1">Multi-pass membrane protein</topology>
    </subcellularLocation>
    <text evidence="4">Found in a complex with HSPA9 and VDAC1 at the endoplasmic reticulum-mitochondria contact sites.</text>
</comment>
<comment type="domain">
    <text evidence="1">Consists mainly of a membrane-spanning beta-barrel formed by 19 beta-strands. The helical N-terminus folds back into the pore opening and plays a role in voltage-gated channel activity.</text>
</comment>
<comment type="PTM">
    <text evidence="1">Phosphorylation at Ser-193 by NEK1 promotes the closed conformational state preventing excessive mitochondrial membrane permeability and subsequent apoptotic cell death after injury. Phosphorylation by the AKT-GSK3B axis stabilizes the protein probably by preventing ubiquitin-mediated proteasomal degradation.</text>
</comment>
<comment type="PTM">
    <text evidence="1">Ubiquitinated. Undergoes monoubiquitination and polyubiquitination by PRKN; monoubiquitination at Lys-274 inhibits apoptosis, whereas polyubiquitination leads to its degradation and promotes mitophagy. Deubiquitinated by USP30.</text>
</comment>
<comment type="similarity">
    <text evidence="6">Belongs to the eukaryotic mitochondrial porin family.</text>
</comment>
<organism>
    <name type="scientific">Ovis aries</name>
    <name type="common">Sheep</name>
    <dbReference type="NCBI Taxonomy" id="9940"/>
    <lineage>
        <taxon>Eukaryota</taxon>
        <taxon>Metazoa</taxon>
        <taxon>Chordata</taxon>
        <taxon>Craniata</taxon>
        <taxon>Vertebrata</taxon>
        <taxon>Euteleostomi</taxon>
        <taxon>Mammalia</taxon>
        <taxon>Eutheria</taxon>
        <taxon>Laurasiatheria</taxon>
        <taxon>Artiodactyla</taxon>
        <taxon>Ruminantia</taxon>
        <taxon>Pecora</taxon>
        <taxon>Bovidae</taxon>
        <taxon>Caprinae</taxon>
        <taxon>Ovis</taxon>
    </lineage>
</organism>
<dbReference type="EMBL" id="AMGL01092866">
    <property type="status" value="NOT_ANNOTATED_CDS"/>
    <property type="molecule type" value="Genomic_DNA"/>
</dbReference>
<dbReference type="EMBL" id="AMGL01092867">
    <property type="status" value="NOT_ANNOTATED_CDS"/>
    <property type="molecule type" value="Genomic_DNA"/>
</dbReference>
<dbReference type="EMBL" id="AMGL01092868">
    <property type="status" value="NOT_ANNOTATED_CDS"/>
    <property type="molecule type" value="Genomic_DNA"/>
</dbReference>
<dbReference type="RefSeq" id="XP_012032912.1">
    <property type="nucleotide sequence ID" value="XM_012177522.2"/>
</dbReference>
<dbReference type="RefSeq" id="XP_014950955.1">
    <property type="nucleotide sequence ID" value="XM_015095469.3"/>
</dbReference>
<dbReference type="RefSeq" id="XP_014950956.1">
    <property type="nucleotide sequence ID" value="XM_015095470.3"/>
</dbReference>
<dbReference type="RefSeq" id="XP_027824959.1">
    <property type="nucleotide sequence ID" value="XM_027969158.2"/>
</dbReference>
<dbReference type="RefSeq" id="XP_042105266.1">
    <property type="nucleotide sequence ID" value="XM_042249332.2"/>
</dbReference>
<dbReference type="RefSeq" id="XP_042105268.1">
    <property type="nucleotide sequence ID" value="XM_042249334.2"/>
</dbReference>
<dbReference type="RefSeq" id="XP_042105269.1">
    <property type="nucleotide sequence ID" value="XM_042249335.2"/>
</dbReference>
<dbReference type="RefSeq" id="XP_060271247.1">
    <property type="nucleotide sequence ID" value="XM_060415264.1"/>
</dbReference>
<dbReference type="SMR" id="A0A6P7EFR0"/>
<dbReference type="PaxDb" id="9940-ENSOARP00000014695"/>
<dbReference type="Ensembl" id="ENSOART00020056666">
    <property type="protein sequence ID" value="ENSOARP00020051247"/>
    <property type="gene ID" value="ENSOARG00020021794"/>
</dbReference>
<dbReference type="Ensembl" id="ENSOART00215085882">
    <property type="protein sequence ID" value="ENSOARP00215047106"/>
    <property type="gene ID" value="ENSOARG00215050680"/>
</dbReference>
<dbReference type="Ensembl" id="ENSOART00220097330">
    <property type="protein sequence ID" value="ENSOARP00220051016"/>
    <property type="gene ID" value="ENSOARG00220058964"/>
</dbReference>
<dbReference type="Ensembl" id="ENSOART00225085867">
    <property type="protein sequence ID" value="ENSOARP00225044815"/>
    <property type="gene ID" value="ENSOARG00225051584"/>
</dbReference>
<dbReference type="GeneID" id="100145866"/>
<dbReference type="CTD" id="7416"/>
<dbReference type="eggNOG" id="KOG3126">
    <property type="taxonomic scope" value="Eukaryota"/>
</dbReference>
<dbReference type="HOGENOM" id="CLU_044399_2_0_1"/>
<dbReference type="OMA" id="KPCCSHE"/>
<dbReference type="OrthoDB" id="7827681at2759"/>
<dbReference type="Proteomes" id="UP000002356">
    <property type="component" value="Chromosome 5"/>
</dbReference>
<dbReference type="Bgee" id="ENSOARG00000013705">
    <property type="expression patterns" value="Expressed in longissimus thoracis muscle and 55 other cell types or tissues"/>
</dbReference>
<dbReference type="GO" id="GO:0045121">
    <property type="term" value="C:membrane raft"/>
    <property type="evidence" value="ECO:0007669"/>
    <property type="project" value="UniProtKB-SubCell"/>
</dbReference>
<dbReference type="GO" id="GO:0005741">
    <property type="term" value="C:mitochondrial outer membrane"/>
    <property type="evidence" value="ECO:0007669"/>
    <property type="project" value="UniProtKB-SubCell"/>
</dbReference>
<dbReference type="GO" id="GO:0005886">
    <property type="term" value="C:plasma membrane"/>
    <property type="evidence" value="ECO:0007669"/>
    <property type="project" value="UniProtKB-SubCell"/>
</dbReference>
<dbReference type="GO" id="GO:0046930">
    <property type="term" value="C:pore complex"/>
    <property type="evidence" value="ECO:0007669"/>
    <property type="project" value="UniProtKB-KW"/>
</dbReference>
<dbReference type="GO" id="GO:0005524">
    <property type="term" value="F:ATP binding"/>
    <property type="evidence" value="ECO:0007669"/>
    <property type="project" value="UniProtKB-KW"/>
</dbReference>
<dbReference type="GO" id="GO:0015288">
    <property type="term" value="F:porin activity"/>
    <property type="evidence" value="ECO:0007669"/>
    <property type="project" value="UniProtKB-KW"/>
</dbReference>
<dbReference type="GO" id="GO:0022832">
    <property type="term" value="F:voltage-gated channel activity"/>
    <property type="evidence" value="ECO:0000314"/>
    <property type="project" value="UniProtKB"/>
</dbReference>
<dbReference type="GO" id="GO:0008308">
    <property type="term" value="F:voltage-gated monoatomic anion channel activity"/>
    <property type="evidence" value="ECO:0007669"/>
    <property type="project" value="InterPro"/>
</dbReference>
<dbReference type="GO" id="GO:0005244">
    <property type="term" value="F:voltage-gated monoatomic ion channel activity"/>
    <property type="evidence" value="ECO:0000250"/>
    <property type="project" value="UniProtKB"/>
</dbReference>
<dbReference type="GO" id="GO:0006915">
    <property type="term" value="P:apoptotic process"/>
    <property type="evidence" value="ECO:0007669"/>
    <property type="project" value="UniProtKB-KW"/>
</dbReference>
<dbReference type="GO" id="GO:0006820">
    <property type="term" value="P:monoatomic anion transport"/>
    <property type="evidence" value="ECO:0000250"/>
    <property type="project" value="UniProtKB"/>
</dbReference>
<dbReference type="CDD" id="cd07306">
    <property type="entry name" value="Porin3_VDAC"/>
    <property type="match status" value="1"/>
</dbReference>
<dbReference type="FunFam" id="2.40.160.10:FF:000001">
    <property type="entry name" value="Voltage-dependent anion-selective channel protein 2"/>
    <property type="match status" value="1"/>
</dbReference>
<dbReference type="Gene3D" id="2.40.160.10">
    <property type="entry name" value="Porin"/>
    <property type="match status" value="1"/>
</dbReference>
<dbReference type="InterPro" id="IPR023614">
    <property type="entry name" value="Porin_dom_sf"/>
</dbReference>
<dbReference type="InterPro" id="IPR001925">
    <property type="entry name" value="Porin_Euk"/>
</dbReference>
<dbReference type="InterPro" id="IPR027246">
    <property type="entry name" value="Porin_Euk/Tom40"/>
</dbReference>
<dbReference type="PANTHER" id="PTHR11743">
    <property type="entry name" value="VOLTAGE-DEPENDENT ANION-SELECTIVE CHANNEL"/>
    <property type="match status" value="1"/>
</dbReference>
<dbReference type="PANTHER" id="PTHR11743:SF13">
    <property type="entry name" value="VOLTAGE-DEPENDENT ANION-SELECTIVE CHANNEL PROTEIN 1"/>
    <property type="match status" value="1"/>
</dbReference>
<dbReference type="Pfam" id="PF01459">
    <property type="entry name" value="Porin_3"/>
    <property type="match status" value="1"/>
</dbReference>
<dbReference type="PRINTS" id="PR00185">
    <property type="entry name" value="EUKARYTPORIN"/>
</dbReference>
<dbReference type="PROSITE" id="PS00558">
    <property type="entry name" value="EUKARYOTIC_PORIN"/>
    <property type="match status" value="1"/>
</dbReference>
<reference key="1">
    <citation type="journal article" date="2010" name="Anim. Genet.">
        <title>The sheep genome reference sequence: a work in progress.</title>
        <authorList>
            <person name="Archibald A.L."/>
            <person name="Cockett N.E."/>
            <person name="Dalrymple B.P."/>
            <person name="Faraut T."/>
            <person name="Kijas J.W."/>
            <person name="Maddox J.F."/>
            <person name="McEwan J.C."/>
            <person name="Hutton Oddy V."/>
            <person name="Raadsma H.W."/>
            <person name="Wade C."/>
            <person name="Wang J."/>
            <person name="Wang W."/>
            <person name="Xun X."/>
        </authorList>
    </citation>
    <scope>NUCLEOTIDE SEQUENCE [LARGE SCALE GENOMIC DNA]</scope>
    <source>
        <strain>Texel</strain>
    </source>
</reference>
<reference key="2">
    <citation type="journal article" date="2000" name="J. Bioenerg. Biomembr.">
        <title>Modulation of the voltage-dependent anion channel (VDAC) by glutamate.</title>
        <authorList>
            <person name="Gincel D."/>
            <person name="Silberberg S.D."/>
            <person name="Shoshan-Barmatz V."/>
        </authorList>
    </citation>
    <scope>FUNCTION</scope>
    <scope>TRANSPORTER ACTIVITY</scope>
    <scope>ACTIVITY REGULATION</scope>
</reference>
<name>VDAC1_SHEEP</name>
<keyword id="KW-0007">Acetylation</keyword>
<keyword id="KW-0053">Apoptosis</keyword>
<keyword id="KW-0067">ATP-binding</keyword>
<keyword id="KW-1003">Cell membrane</keyword>
<keyword id="KW-0406">Ion transport</keyword>
<keyword id="KW-1017">Isopeptide bond</keyword>
<keyword id="KW-0472">Membrane</keyword>
<keyword id="KW-0496">Mitochondrion</keyword>
<keyword id="KW-1000">Mitochondrion outer membrane</keyword>
<keyword id="KW-0520">NAD</keyword>
<keyword id="KW-0547">Nucleotide-binding</keyword>
<keyword id="KW-0597">Phosphoprotein</keyword>
<keyword id="KW-0626">Porin</keyword>
<keyword id="KW-1185">Reference proteome</keyword>
<keyword id="KW-0812">Transmembrane</keyword>
<keyword id="KW-1134">Transmembrane beta strand</keyword>
<keyword id="KW-0813">Transport</keyword>
<keyword id="KW-0832">Ubl conjugation</keyword>
<sequence length="283" mass="30741">MAVPPTYADLGKSARDVFTKGYGFGLIKLDLKTKSENGLEFTSSGSANTETTKVTGSLETKYRWTEYGLTFTEKWNTDNTLGTEITVEDQLARGLKLTFDSSFSPNTGKKNAKIKTGYKREHINLGCDVDFDIAGPSIRGALVLGYEGWLAGYQMNFETAKSRVTQSNFAVGYKTDEFQLHTNVNDGTEFGGSIYQKVNKKLETAVNLAWTAGNSNTRFGIAAKYQIDPDACFSAKVNNSSLIGLGYTQTLKPGIKLTLSALLDGKNVNAGGHKLGLGLEFQA</sequence>
<accession>A0A6P7EFR0</accession>
<accession>W5PW62</accession>
<proteinExistence type="inferred from homology"/>
<protein>
    <recommendedName>
        <fullName evidence="1">Non-selective voltage-gated ion channel VDAC1</fullName>
    </recommendedName>
    <alternativeName>
        <fullName>Outer mitochondrial membrane protein porin 1</fullName>
    </alternativeName>
    <alternativeName>
        <fullName>Voltage-dependent anion-selective channel protein 1</fullName>
        <shortName>VDAC-1</shortName>
    </alternativeName>
</protein>
<gene>
    <name evidence="1" type="primary">VDAC1</name>
</gene>
<evidence type="ECO:0000250" key="1">
    <source>
        <dbReference type="UniProtKB" id="P21796"/>
    </source>
</evidence>
<evidence type="ECO:0000250" key="2">
    <source>
        <dbReference type="UniProtKB" id="P45880"/>
    </source>
</evidence>
<evidence type="ECO:0000250" key="3">
    <source>
        <dbReference type="UniProtKB" id="Q60932"/>
    </source>
</evidence>
<evidence type="ECO:0000250" key="4">
    <source>
        <dbReference type="UniProtKB" id="Q9Z2L0"/>
    </source>
</evidence>
<evidence type="ECO:0000269" key="5">
    <source>
    </source>
</evidence>
<evidence type="ECO:0000305" key="6"/>